<sequence>MTLRLSRRAYAEMFGPTTGDRIRLADTELLIEVERDHTLYGEEVKFGGGKVIRDGMGQSQLPAADVADTVITNAVILDHWGIVKADIAIKHGRIAAIGKAGNPDIQPGVTIAIGAATEIIAGEGLIVTAGGIDTHIHFISPQQIDEALASGVTTMIGGGTGPATGTNATTCTPGPWHMERMLQAADGWPINLGFLGKGNASRPQPLVEQIEAGAIGLKLHEDWGTTPAAIDNCLTVADDTDTQVAIHTDTLNEAGFVEATVAAFKGRTIHTYHTEGAGGGHAPDILKVCGEANVLPSSTNPTRPYTINTLDEHLDMLMVCHHLDPSIAEDLAFAESRIRRETIAAEDILHDLGALSMLSSDSQAMGRVGEVIIRTWQTAHKMKVQRGALTGDGARNDNFRAKRYVAKYTINPALTHGIAHEVGSIEPGKWADLVLWEPAFFGVKPAMIVKGGMIAVAQMGDPNASIPTPQPVHYREMFATRGGALARTSLTFVSQLALDAGISARYGLAKRLVPVRGCRTVTKRDMIHNAWQPAIRVDPETYDVVADGALLTCEPAAVLPMAQRYFLF</sequence>
<evidence type="ECO:0000255" key="1">
    <source>
        <dbReference type="HAMAP-Rule" id="MF_01953"/>
    </source>
</evidence>
<reference key="1">
    <citation type="journal article" date="2010" name="Genome Biol. Evol.">
        <title>Continuing evolution of Burkholderia mallei through genome reduction and large-scale rearrangements.</title>
        <authorList>
            <person name="Losada L."/>
            <person name="Ronning C.M."/>
            <person name="DeShazer D."/>
            <person name="Woods D."/>
            <person name="Fedorova N."/>
            <person name="Kim H.S."/>
            <person name="Shabalina S.A."/>
            <person name="Pearson T.R."/>
            <person name="Brinkac L."/>
            <person name="Tan P."/>
            <person name="Nandi T."/>
            <person name="Crabtree J."/>
            <person name="Badger J."/>
            <person name="Beckstrom-Sternberg S."/>
            <person name="Saqib M."/>
            <person name="Schutzer S.E."/>
            <person name="Keim P."/>
            <person name="Nierman W.C."/>
        </authorList>
    </citation>
    <scope>NUCLEOTIDE SEQUENCE [LARGE SCALE GENOMIC DNA]</scope>
    <source>
        <strain>1106a</strain>
    </source>
</reference>
<dbReference type="EC" id="3.5.1.5" evidence="1"/>
<dbReference type="EMBL" id="CP000572">
    <property type="protein sequence ID" value="ABN89730.1"/>
    <property type="molecule type" value="Genomic_DNA"/>
</dbReference>
<dbReference type="RefSeq" id="WP_004534054.1">
    <property type="nucleotide sequence ID" value="NC_009076.1"/>
</dbReference>
<dbReference type="SMR" id="A3NYC9"/>
<dbReference type="KEGG" id="bpl:BURPS1106A_3112"/>
<dbReference type="HOGENOM" id="CLU_000980_0_0_4"/>
<dbReference type="UniPathway" id="UPA00258">
    <property type="reaction ID" value="UER00370"/>
</dbReference>
<dbReference type="Proteomes" id="UP000006738">
    <property type="component" value="Chromosome I"/>
</dbReference>
<dbReference type="GO" id="GO:0005737">
    <property type="term" value="C:cytoplasm"/>
    <property type="evidence" value="ECO:0007669"/>
    <property type="project" value="UniProtKB-SubCell"/>
</dbReference>
<dbReference type="GO" id="GO:0016151">
    <property type="term" value="F:nickel cation binding"/>
    <property type="evidence" value="ECO:0007669"/>
    <property type="project" value="UniProtKB-UniRule"/>
</dbReference>
<dbReference type="GO" id="GO:0009039">
    <property type="term" value="F:urease activity"/>
    <property type="evidence" value="ECO:0007669"/>
    <property type="project" value="UniProtKB-UniRule"/>
</dbReference>
<dbReference type="GO" id="GO:0043419">
    <property type="term" value="P:urea catabolic process"/>
    <property type="evidence" value="ECO:0007669"/>
    <property type="project" value="UniProtKB-UniRule"/>
</dbReference>
<dbReference type="CDD" id="cd00375">
    <property type="entry name" value="Urease_alpha"/>
    <property type="match status" value="1"/>
</dbReference>
<dbReference type="Gene3D" id="3.20.20.140">
    <property type="entry name" value="Metal-dependent hydrolases"/>
    <property type="match status" value="1"/>
</dbReference>
<dbReference type="Gene3D" id="2.30.40.10">
    <property type="entry name" value="Urease, subunit C, domain 1"/>
    <property type="match status" value="1"/>
</dbReference>
<dbReference type="HAMAP" id="MF_01953">
    <property type="entry name" value="Urease_alpha"/>
    <property type="match status" value="1"/>
</dbReference>
<dbReference type="InterPro" id="IPR006680">
    <property type="entry name" value="Amidohydro-rel"/>
</dbReference>
<dbReference type="InterPro" id="IPR011059">
    <property type="entry name" value="Metal-dep_hydrolase_composite"/>
</dbReference>
<dbReference type="InterPro" id="IPR032466">
    <property type="entry name" value="Metal_Hydrolase"/>
</dbReference>
<dbReference type="InterPro" id="IPR011612">
    <property type="entry name" value="Urease_alpha_N_dom"/>
</dbReference>
<dbReference type="InterPro" id="IPR050112">
    <property type="entry name" value="Urease_alpha_subunit"/>
</dbReference>
<dbReference type="InterPro" id="IPR017950">
    <property type="entry name" value="Urease_AS"/>
</dbReference>
<dbReference type="InterPro" id="IPR005848">
    <property type="entry name" value="Urease_asu"/>
</dbReference>
<dbReference type="InterPro" id="IPR017951">
    <property type="entry name" value="Urease_asu_c"/>
</dbReference>
<dbReference type="InterPro" id="IPR029754">
    <property type="entry name" value="Urease_Ni-bd"/>
</dbReference>
<dbReference type="NCBIfam" id="NF009685">
    <property type="entry name" value="PRK13206.1"/>
    <property type="match status" value="1"/>
</dbReference>
<dbReference type="NCBIfam" id="NF009686">
    <property type="entry name" value="PRK13207.1"/>
    <property type="match status" value="1"/>
</dbReference>
<dbReference type="NCBIfam" id="TIGR01792">
    <property type="entry name" value="urease_alph"/>
    <property type="match status" value="1"/>
</dbReference>
<dbReference type="PANTHER" id="PTHR43440">
    <property type="entry name" value="UREASE"/>
    <property type="match status" value="1"/>
</dbReference>
<dbReference type="PANTHER" id="PTHR43440:SF1">
    <property type="entry name" value="UREASE"/>
    <property type="match status" value="1"/>
</dbReference>
<dbReference type="Pfam" id="PF01979">
    <property type="entry name" value="Amidohydro_1"/>
    <property type="match status" value="1"/>
</dbReference>
<dbReference type="Pfam" id="PF00449">
    <property type="entry name" value="Urease_alpha"/>
    <property type="match status" value="1"/>
</dbReference>
<dbReference type="PRINTS" id="PR01752">
    <property type="entry name" value="UREASE"/>
</dbReference>
<dbReference type="SUPFAM" id="SSF51338">
    <property type="entry name" value="Composite domain of metallo-dependent hydrolases"/>
    <property type="match status" value="2"/>
</dbReference>
<dbReference type="SUPFAM" id="SSF51556">
    <property type="entry name" value="Metallo-dependent hydrolases"/>
    <property type="match status" value="1"/>
</dbReference>
<dbReference type="PROSITE" id="PS01120">
    <property type="entry name" value="UREASE_1"/>
    <property type="match status" value="1"/>
</dbReference>
<dbReference type="PROSITE" id="PS00145">
    <property type="entry name" value="UREASE_2"/>
    <property type="match status" value="1"/>
</dbReference>
<dbReference type="PROSITE" id="PS51368">
    <property type="entry name" value="UREASE_3"/>
    <property type="match status" value="1"/>
</dbReference>
<organism>
    <name type="scientific">Burkholderia pseudomallei (strain 1106a)</name>
    <dbReference type="NCBI Taxonomy" id="357348"/>
    <lineage>
        <taxon>Bacteria</taxon>
        <taxon>Pseudomonadati</taxon>
        <taxon>Pseudomonadota</taxon>
        <taxon>Betaproteobacteria</taxon>
        <taxon>Burkholderiales</taxon>
        <taxon>Burkholderiaceae</taxon>
        <taxon>Burkholderia</taxon>
        <taxon>pseudomallei group</taxon>
    </lineage>
</organism>
<protein>
    <recommendedName>
        <fullName evidence="1">Urease subunit alpha</fullName>
        <ecNumber evidence="1">3.5.1.5</ecNumber>
    </recommendedName>
    <alternativeName>
        <fullName evidence="1">Urea amidohydrolase subunit alpha</fullName>
    </alternativeName>
</protein>
<accession>A3NYC9</accession>
<name>URE1_BURP0</name>
<proteinExistence type="inferred from homology"/>
<comment type="catalytic activity">
    <reaction evidence="1">
        <text>urea + 2 H2O + H(+) = hydrogencarbonate + 2 NH4(+)</text>
        <dbReference type="Rhea" id="RHEA:20557"/>
        <dbReference type="ChEBI" id="CHEBI:15377"/>
        <dbReference type="ChEBI" id="CHEBI:15378"/>
        <dbReference type="ChEBI" id="CHEBI:16199"/>
        <dbReference type="ChEBI" id="CHEBI:17544"/>
        <dbReference type="ChEBI" id="CHEBI:28938"/>
        <dbReference type="EC" id="3.5.1.5"/>
    </reaction>
</comment>
<comment type="cofactor">
    <cofactor evidence="1">
        <name>Ni cation</name>
        <dbReference type="ChEBI" id="CHEBI:25516"/>
    </cofactor>
    <text evidence="1">Binds 2 nickel ions per subunit.</text>
</comment>
<comment type="pathway">
    <text evidence="1">Nitrogen metabolism; urea degradation; CO(2) and NH(3) from urea (urease route): step 1/1.</text>
</comment>
<comment type="subunit">
    <text evidence="1">Heterotrimer of UreA (gamma), UreB (beta) and UreC (alpha) subunits. Three heterotrimers associate to form the active enzyme.</text>
</comment>
<comment type="subcellular location">
    <subcellularLocation>
        <location evidence="1">Cytoplasm</location>
    </subcellularLocation>
</comment>
<comment type="PTM">
    <text evidence="1">Carboxylation allows a single lysine to coordinate two nickel ions.</text>
</comment>
<comment type="similarity">
    <text evidence="1">Belongs to the metallo-dependent hydrolases superfamily. Urease alpha subunit family.</text>
</comment>
<gene>
    <name evidence="1" type="primary">ureC</name>
    <name type="ordered locus">BURPS1106A_3112</name>
</gene>
<keyword id="KW-0963">Cytoplasm</keyword>
<keyword id="KW-0378">Hydrolase</keyword>
<keyword id="KW-0479">Metal-binding</keyword>
<keyword id="KW-0533">Nickel</keyword>
<feature type="chain" id="PRO_1000070652" description="Urease subunit alpha">
    <location>
        <begin position="1"/>
        <end position="568"/>
    </location>
</feature>
<feature type="domain" description="Urease" evidence="1">
    <location>
        <begin position="130"/>
        <end position="568"/>
    </location>
</feature>
<feature type="active site" description="Proton donor" evidence="1">
    <location>
        <position position="321"/>
    </location>
</feature>
<feature type="binding site" evidence="1">
    <location>
        <position position="135"/>
    </location>
    <ligand>
        <name>Ni(2+)</name>
        <dbReference type="ChEBI" id="CHEBI:49786"/>
        <label>1</label>
    </ligand>
</feature>
<feature type="binding site" evidence="1">
    <location>
        <position position="137"/>
    </location>
    <ligand>
        <name>Ni(2+)</name>
        <dbReference type="ChEBI" id="CHEBI:49786"/>
        <label>1</label>
    </ligand>
</feature>
<feature type="binding site" description="via carbamate group" evidence="1">
    <location>
        <position position="218"/>
    </location>
    <ligand>
        <name>Ni(2+)</name>
        <dbReference type="ChEBI" id="CHEBI:49786"/>
        <label>1</label>
    </ligand>
</feature>
<feature type="binding site" description="via carbamate group" evidence="1">
    <location>
        <position position="218"/>
    </location>
    <ligand>
        <name>Ni(2+)</name>
        <dbReference type="ChEBI" id="CHEBI:49786"/>
        <label>2</label>
    </ligand>
</feature>
<feature type="binding site" evidence="1">
    <location>
        <position position="220"/>
    </location>
    <ligand>
        <name>substrate</name>
    </ligand>
</feature>
<feature type="binding site" evidence="1">
    <location>
        <position position="247"/>
    </location>
    <ligand>
        <name>Ni(2+)</name>
        <dbReference type="ChEBI" id="CHEBI:49786"/>
        <label>2</label>
    </ligand>
</feature>
<feature type="binding site" evidence="1">
    <location>
        <position position="273"/>
    </location>
    <ligand>
        <name>Ni(2+)</name>
        <dbReference type="ChEBI" id="CHEBI:49786"/>
        <label>2</label>
    </ligand>
</feature>
<feature type="binding site" evidence="1">
    <location>
        <position position="361"/>
    </location>
    <ligand>
        <name>Ni(2+)</name>
        <dbReference type="ChEBI" id="CHEBI:49786"/>
        <label>1</label>
    </ligand>
</feature>
<feature type="modified residue" description="N6-carboxylysine" evidence="1">
    <location>
        <position position="218"/>
    </location>
</feature>